<keyword id="KW-0067">ATP-binding</keyword>
<keyword id="KW-0408">Iron</keyword>
<keyword id="KW-0411">Iron-sulfur</keyword>
<keyword id="KW-0479">Metal-binding</keyword>
<keyword id="KW-0535">Nitrogen fixation</keyword>
<keyword id="KW-0547">Nucleotide-binding</keyword>
<keyword id="KW-0560">Oxidoreductase</keyword>
<feature type="chain" id="PRO_0000213559" description="Nitrogenase iron-iron protein delta chain">
    <location>
        <begin position="1"/>
        <end position="112"/>
    </location>
</feature>
<evidence type="ECO:0000250" key="1"/>
<proteinExistence type="inferred from homology"/>
<sequence length="112" mass="13273">MDDKVEEPIDFIMKHCLWQSHSRNWDRERQNEEILKKTKQLLCGEPVDLSTPSDRCYWVDAVSLVDAYRERYTWINAMSKDELAQLIDTLKARLDYLTISGSLNEELSDKNY</sequence>
<gene>
    <name type="primary">anfG</name>
</gene>
<protein>
    <recommendedName>
        <fullName>Nitrogenase iron-iron protein delta chain</fullName>
        <ecNumber>1.18.6.1</ecNumber>
    </recommendedName>
    <alternativeName>
        <fullName>Dinitrogenase 3 delta subunit</fullName>
    </alternativeName>
    <alternativeName>
        <fullName>Nitrogenase component I</fullName>
    </alternativeName>
</protein>
<dbReference type="EC" id="1.18.6.1"/>
<dbReference type="EMBL" id="AF058780">
    <property type="protein sequence ID" value="AAC14332.1"/>
    <property type="molecule type" value="Genomic_DNA"/>
</dbReference>
<dbReference type="SMR" id="O68946"/>
<dbReference type="GO" id="GO:0005524">
    <property type="term" value="F:ATP binding"/>
    <property type="evidence" value="ECO:0007669"/>
    <property type="project" value="UniProtKB-KW"/>
</dbReference>
<dbReference type="GO" id="GO:0005506">
    <property type="term" value="F:iron ion binding"/>
    <property type="evidence" value="ECO:0007669"/>
    <property type="project" value="InterPro"/>
</dbReference>
<dbReference type="GO" id="GO:0051536">
    <property type="term" value="F:iron-sulfur cluster binding"/>
    <property type="evidence" value="ECO:0007669"/>
    <property type="project" value="UniProtKB-KW"/>
</dbReference>
<dbReference type="GO" id="GO:0016163">
    <property type="term" value="F:nitrogenase activity"/>
    <property type="evidence" value="ECO:0007669"/>
    <property type="project" value="UniProtKB-EC"/>
</dbReference>
<dbReference type="GO" id="GO:0009399">
    <property type="term" value="P:nitrogen fixation"/>
    <property type="evidence" value="ECO:0007669"/>
    <property type="project" value="UniProtKB-KW"/>
</dbReference>
<dbReference type="InterPro" id="IPR014278">
    <property type="entry name" value="Nase_Fe-Fe_dsu"/>
</dbReference>
<dbReference type="InterPro" id="IPR004349">
    <property type="entry name" value="V/Nase_d_su"/>
</dbReference>
<dbReference type="NCBIfam" id="TIGR02929">
    <property type="entry name" value="anfG_nitrog"/>
    <property type="match status" value="1"/>
</dbReference>
<dbReference type="Pfam" id="PF03139">
    <property type="entry name" value="AnfG_VnfG"/>
    <property type="match status" value="1"/>
</dbReference>
<reference key="1">
    <citation type="journal article" date="1999" name="Can. J. Microbiol.">
        <title>Identification of genes unique to Mo-independent nitrogenase systems in diverse diazotrophs.</title>
        <authorList>
            <person name="Loveless T.M."/>
            <person name="Bishop P.E."/>
        </authorList>
    </citation>
    <scope>NUCLEOTIDE SEQUENCE [GENOMIC DNA]</scope>
</reference>
<comment type="function">
    <text>The key enzymatic reactions in nitrogen fixation are catalyzed by the nitrogenase complex, which has 2 components: the iron protein (component 2) and a component 1 which is either a molybdenum-iron protein, a vanadium-iron, or an iron-iron protein.</text>
</comment>
<comment type="catalytic activity">
    <reaction>
        <text>N2 + 8 reduced [2Fe-2S]-[ferredoxin] + 16 ATP + 16 H2O = H2 + 8 oxidized [2Fe-2S]-[ferredoxin] + 2 NH4(+) + 16 ADP + 16 phosphate + 6 H(+)</text>
        <dbReference type="Rhea" id="RHEA:21448"/>
        <dbReference type="Rhea" id="RHEA-COMP:10000"/>
        <dbReference type="Rhea" id="RHEA-COMP:10001"/>
        <dbReference type="ChEBI" id="CHEBI:15377"/>
        <dbReference type="ChEBI" id="CHEBI:15378"/>
        <dbReference type="ChEBI" id="CHEBI:17997"/>
        <dbReference type="ChEBI" id="CHEBI:18276"/>
        <dbReference type="ChEBI" id="CHEBI:28938"/>
        <dbReference type="ChEBI" id="CHEBI:30616"/>
        <dbReference type="ChEBI" id="CHEBI:33737"/>
        <dbReference type="ChEBI" id="CHEBI:33738"/>
        <dbReference type="ChEBI" id="CHEBI:43474"/>
        <dbReference type="ChEBI" id="CHEBI:456216"/>
        <dbReference type="EC" id="1.18.6.1"/>
    </reaction>
</comment>
<comment type="cofactor">
    <cofactor evidence="1">
        <name>iron-sulfur cluster</name>
        <dbReference type="ChEBI" id="CHEBI:30408"/>
    </cofactor>
</comment>
<comment type="subunit">
    <text evidence="1">Hexamer of two alpha, two beta, and two delta chains.</text>
</comment>
<name>ANFG_AZOMA</name>
<accession>O68946</accession>
<organism>
    <name type="scientific">Azomonas macrocytogenes</name>
    <name type="common">Azotobacter macrocytogenes</name>
    <dbReference type="NCBI Taxonomy" id="69962"/>
    <lineage>
        <taxon>Bacteria</taxon>
        <taxon>Pseudomonadati</taxon>
        <taxon>Pseudomonadota</taxon>
        <taxon>Gammaproteobacteria</taxon>
        <taxon>Pseudomonadales</taxon>
        <taxon>Pseudomonadaceae</taxon>
        <taxon>Azomonas</taxon>
    </lineage>
</organism>